<keyword id="KW-0012">Acyltransferase</keyword>
<keyword id="KW-0133">Cell shape</keyword>
<keyword id="KW-0961">Cell wall biogenesis/degradation</keyword>
<keyword id="KW-0963">Cytoplasm</keyword>
<keyword id="KW-0460">Magnesium</keyword>
<keyword id="KW-0479">Metal-binding</keyword>
<keyword id="KW-0511">Multifunctional enzyme</keyword>
<keyword id="KW-0548">Nucleotidyltransferase</keyword>
<keyword id="KW-0573">Peptidoglycan synthesis</keyword>
<keyword id="KW-0677">Repeat</keyword>
<keyword id="KW-0808">Transferase</keyword>
<accession>A0L2S6</accession>
<gene>
    <name evidence="1" type="primary">glmU</name>
    <name type="ordered locus">Shewana3_4128</name>
</gene>
<sequence>MALNVVILAAGKGTRMRSDLPKVLHPIAHKSMVQHVIDTAHSIGSNAIQLVYGYGADKLKSALGEQQLNWMLQAEQLGTGHAVAQAIPNIDDNDTVLILYGDVPLIQASTLEALLAARPDNGVAILTVNLSNPTGYGRIVREQGKVVGIVEQKDANAEQLAINEINTGIMAVPGKALKTWLGRLSNNNAQGEYYLTDIIAMAHADGVEINTAQPQSAIEVEGANNRVQLAQLERAYQAREAEKLMIAGANLRDPSRIDIRGEVTVGMDVMVDVNVIFEGKVVIGNNVSIGAGAILIDCEIADNAEIKPYSIIEGAKLGVAASAGPFARLRPGAELMQDAHIGNFVEMKKAVLGVGSKAGHLAYLGDAQIGAGVNIGAGTITCNYDGANKHLTVIEDNVFVGSDTQLVAPVTIGKGATLGAGSTITRDVGEDELVITRVKQKHLTGWQRPVKIKK</sequence>
<protein>
    <recommendedName>
        <fullName evidence="1">Bifunctional protein GlmU</fullName>
    </recommendedName>
    <domain>
        <recommendedName>
            <fullName evidence="1">UDP-N-acetylglucosamine pyrophosphorylase</fullName>
            <ecNumber evidence="1">2.7.7.23</ecNumber>
        </recommendedName>
        <alternativeName>
            <fullName evidence="1">N-acetylglucosamine-1-phosphate uridyltransferase</fullName>
        </alternativeName>
    </domain>
    <domain>
        <recommendedName>
            <fullName evidence="1">Glucosamine-1-phosphate N-acetyltransferase</fullName>
            <ecNumber evidence="1">2.3.1.157</ecNumber>
        </recommendedName>
    </domain>
</protein>
<organism>
    <name type="scientific">Shewanella sp. (strain ANA-3)</name>
    <dbReference type="NCBI Taxonomy" id="94122"/>
    <lineage>
        <taxon>Bacteria</taxon>
        <taxon>Pseudomonadati</taxon>
        <taxon>Pseudomonadota</taxon>
        <taxon>Gammaproteobacteria</taxon>
        <taxon>Alteromonadales</taxon>
        <taxon>Shewanellaceae</taxon>
        <taxon>Shewanella</taxon>
    </lineage>
</organism>
<proteinExistence type="inferred from homology"/>
<name>GLMU_SHESA</name>
<comment type="function">
    <text evidence="1">Catalyzes the last two sequential reactions in the de novo biosynthetic pathway for UDP-N-acetylglucosamine (UDP-GlcNAc). The C-terminal domain catalyzes the transfer of acetyl group from acetyl coenzyme A to glucosamine-1-phosphate (GlcN-1-P) to produce N-acetylglucosamine-1-phosphate (GlcNAc-1-P), which is converted into UDP-GlcNAc by the transfer of uridine 5-monophosphate (from uridine 5-triphosphate), a reaction catalyzed by the N-terminal domain.</text>
</comment>
<comment type="catalytic activity">
    <reaction evidence="1">
        <text>alpha-D-glucosamine 1-phosphate + acetyl-CoA = N-acetyl-alpha-D-glucosamine 1-phosphate + CoA + H(+)</text>
        <dbReference type="Rhea" id="RHEA:13725"/>
        <dbReference type="ChEBI" id="CHEBI:15378"/>
        <dbReference type="ChEBI" id="CHEBI:57287"/>
        <dbReference type="ChEBI" id="CHEBI:57288"/>
        <dbReference type="ChEBI" id="CHEBI:57776"/>
        <dbReference type="ChEBI" id="CHEBI:58516"/>
        <dbReference type="EC" id="2.3.1.157"/>
    </reaction>
</comment>
<comment type="catalytic activity">
    <reaction evidence="1">
        <text>N-acetyl-alpha-D-glucosamine 1-phosphate + UTP + H(+) = UDP-N-acetyl-alpha-D-glucosamine + diphosphate</text>
        <dbReference type="Rhea" id="RHEA:13509"/>
        <dbReference type="ChEBI" id="CHEBI:15378"/>
        <dbReference type="ChEBI" id="CHEBI:33019"/>
        <dbReference type="ChEBI" id="CHEBI:46398"/>
        <dbReference type="ChEBI" id="CHEBI:57705"/>
        <dbReference type="ChEBI" id="CHEBI:57776"/>
        <dbReference type="EC" id="2.7.7.23"/>
    </reaction>
</comment>
<comment type="cofactor">
    <cofactor evidence="1">
        <name>Mg(2+)</name>
        <dbReference type="ChEBI" id="CHEBI:18420"/>
    </cofactor>
    <text evidence="1">Binds 1 Mg(2+) ion per subunit.</text>
</comment>
<comment type="pathway">
    <text evidence="1">Nucleotide-sugar biosynthesis; UDP-N-acetyl-alpha-D-glucosamine biosynthesis; N-acetyl-alpha-D-glucosamine 1-phosphate from alpha-D-glucosamine 6-phosphate (route II): step 2/2.</text>
</comment>
<comment type="pathway">
    <text evidence="1">Nucleotide-sugar biosynthesis; UDP-N-acetyl-alpha-D-glucosamine biosynthesis; UDP-N-acetyl-alpha-D-glucosamine from N-acetyl-alpha-D-glucosamine 1-phosphate: step 1/1.</text>
</comment>
<comment type="pathway">
    <text evidence="1">Bacterial outer membrane biogenesis; LPS lipid A biosynthesis.</text>
</comment>
<comment type="subunit">
    <text evidence="1">Homotrimer.</text>
</comment>
<comment type="subcellular location">
    <subcellularLocation>
        <location evidence="1">Cytoplasm</location>
    </subcellularLocation>
</comment>
<comment type="similarity">
    <text evidence="1">In the N-terminal section; belongs to the N-acetylglucosamine-1-phosphate uridyltransferase family.</text>
</comment>
<comment type="similarity">
    <text evidence="1">In the C-terminal section; belongs to the transferase hexapeptide repeat family.</text>
</comment>
<dbReference type="EC" id="2.7.7.23" evidence="1"/>
<dbReference type="EC" id="2.3.1.157" evidence="1"/>
<dbReference type="EMBL" id="CP000469">
    <property type="protein sequence ID" value="ABK50345.1"/>
    <property type="molecule type" value="Genomic_DNA"/>
</dbReference>
<dbReference type="RefSeq" id="WP_011718831.1">
    <property type="nucleotide sequence ID" value="NC_008577.1"/>
</dbReference>
<dbReference type="SMR" id="A0L2S6"/>
<dbReference type="STRING" id="94122.Shewana3_4128"/>
<dbReference type="KEGG" id="shn:Shewana3_4128"/>
<dbReference type="eggNOG" id="COG1207">
    <property type="taxonomic scope" value="Bacteria"/>
</dbReference>
<dbReference type="HOGENOM" id="CLU_029499_15_2_6"/>
<dbReference type="OrthoDB" id="9775031at2"/>
<dbReference type="UniPathway" id="UPA00113">
    <property type="reaction ID" value="UER00532"/>
</dbReference>
<dbReference type="UniPathway" id="UPA00113">
    <property type="reaction ID" value="UER00533"/>
</dbReference>
<dbReference type="UniPathway" id="UPA00973"/>
<dbReference type="Proteomes" id="UP000002589">
    <property type="component" value="Chromosome"/>
</dbReference>
<dbReference type="GO" id="GO:0005737">
    <property type="term" value="C:cytoplasm"/>
    <property type="evidence" value="ECO:0007669"/>
    <property type="project" value="UniProtKB-SubCell"/>
</dbReference>
<dbReference type="GO" id="GO:0016020">
    <property type="term" value="C:membrane"/>
    <property type="evidence" value="ECO:0007669"/>
    <property type="project" value="GOC"/>
</dbReference>
<dbReference type="GO" id="GO:0019134">
    <property type="term" value="F:glucosamine-1-phosphate N-acetyltransferase activity"/>
    <property type="evidence" value="ECO:0007669"/>
    <property type="project" value="UniProtKB-UniRule"/>
</dbReference>
<dbReference type="GO" id="GO:0000287">
    <property type="term" value="F:magnesium ion binding"/>
    <property type="evidence" value="ECO:0007669"/>
    <property type="project" value="UniProtKB-UniRule"/>
</dbReference>
<dbReference type="GO" id="GO:0003977">
    <property type="term" value="F:UDP-N-acetylglucosamine diphosphorylase activity"/>
    <property type="evidence" value="ECO:0007669"/>
    <property type="project" value="UniProtKB-UniRule"/>
</dbReference>
<dbReference type="GO" id="GO:0000902">
    <property type="term" value="P:cell morphogenesis"/>
    <property type="evidence" value="ECO:0007669"/>
    <property type="project" value="UniProtKB-UniRule"/>
</dbReference>
<dbReference type="GO" id="GO:0071555">
    <property type="term" value="P:cell wall organization"/>
    <property type="evidence" value="ECO:0007669"/>
    <property type="project" value="UniProtKB-KW"/>
</dbReference>
<dbReference type="GO" id="GO:0009245">
    <property type="term" value="P:lipid A biosynthetic process"/>
    <property type="evidence" value="ECO:0007669"/>
    <property type="project" value="UniProtKB-UniRule"/>
</dbReference>
<dbReference type="GO" id="GO:0009252">
    <property type="term" value="P:peptidoglycan biosynthetic process"/>
    <property type="evidence" value="ECO:0007669"/>
    <property type="project" value="UniProtKB-UniRule"/>
</dbReference>
<dbReference type="GO" id="GO:0008360">
    <property type="term" value="P:regulation of cell shape"/>
    <property type="evidence" value="ECO:0007669"/>
    <property type="project" value="UniProtKB-KW"/>
</dbReference>
<dbReference type="GO" id="GO:0006048">
    <property type="term" value="P:UDP-N-acetylglucosamine biosynthetic process"/>
    <property type="evidence" value="ECO:0007669"/>
    <property type="project" value="UniProtKB-UniPathway"/>
</dbReference>
<dbReference type="CDD" id="cd02540">
    <property type="entry name" value="GT2_GlmU_N_bac"/>
    <property type="match status" value="1"/>
</dbReference>
<dbReference type="CDD" id="cd03353">
    <property type="entry name" value="LbH_GlmU_C"/>
    <property type="match status" value="1"/>
</dbReference>
<dbReference type="FunFam" id="3.90.550.10:FF:000006">
    <property type="entry name" value="Bifunctional protein GlmU"/>
    <property type="match status" value="1"/>
</dbReference>
<dbReference type="Gene3D" id="2.160.10.10">
    <property type="entry name" value="Hexapeptide repeat proteins"/>
    <property type="match status" value="1"/>
</dbReference>
<dbReference type="Gene3D" id="3.90.550.10">
    <property type="entry name" value="Spore Coat Polysaccharide Biosynthesis Protein SpsA, Chain A"/>
    <property type="match status" value="1"/>
</dbReference>
<dbReference type="HAMAP" id="MF_01631">
    <property type="entry name" value="GlmU"/>
    <property type="match status" value="1"/>
</dbReference>
<dbReference type="InterPro" id="IPR005882">
    <property type="entry name" value="Bifunctional_GlmU"/>
</dbReference>
<dbReference type="InterPro" id="IPR050065">
    <property type="entry name" value="GlmU-like"/>
</dbReference>
<dbReference type="InterPro" id="IPR038009">
    <property type="entry name" value="GlmU_C_LbH"/>
</dbReference>
<dbReference type="InterPro" id="IPR001451">
    <property type="entry name" value="Hexapep"/>
</dbReference>
<dbReference type="InterPro" id="IPR018357">
    <property type="entry name" value="Hexapep_transf_CS"/>
</dbReference>
<dbReference type="InterPro" id="IPR025877">
    <property type="entry name" value="MobA-like_NTP_Trfase"/>
</dbReference>
<dbReference type="InterPro" id="IPR029044">
    <property type="entry name" value="Nucleotide-diphossugar_trans"/>
</dbReference>
<dbReference type="InterPro" id="IPR011004">
    <property type="entry name" value="Trimer_LpxA-like_sf"/>
</dbReference>
<dbReference type="NCBIfam" id="TIGR01173">
    <property type="entry name" value="glmU"/>
    <property type="match status" value="1"/>
</dbReference>
<dbReference type="NCBIfam" id="NF006986">
    <property type="entry name" value="PRK09451.1"/>
    <property type="match status" value="1"/>
</dbReference>
<dbReference type="PANTHER" id="PTHR43584:SF3">
    <property type="entry name" value="BIFUNCTIONAL PROTEIN GLMU"/>
    <property type="match status" value="1"/>
</dbReference>
<dbReference type="PANTHER" id="PTHR43584">
    <property type="entry name" value="NUCLEOTIDYL TRANSFERASE"/>
    <property type="match status" value="1"/>
</dbReference>
<dbReference type="Pfam" id="PF00132">
    <property type="entry name" value="Hexapep"/>
    <property type="match status" value="1"/>
</dbReference>
<dbReference type="Pfam" id="PF12804">
    <property type="entry name" value="NTP_transf_3"/>
    <property type="match status" value="1"/>
</dbReference>
<dbReference type="SUPFAM" id="SSF53448">
    <property type="entry name" value="Nucleotide-diphospho-sugar transferases"/>
    <property type="match status" value="1"/>
</dbReference>
<dbReference type="SUPFAM" id="SSF51161">
    <property type="entry name" value="Trimeric LpxA-like enzymes"/>
    <property type="match status" value="1"/>
</dbReference>
<dbReference type="PROSITE" id="PS00101">
    <property type="entry name" value="HEXAPEP_TRANSFERASES"/>
    <property type="match status" value="1"/>
</dbReference>
<reference key="1">
    <citation type="submission" date="2006-09" db="EMBL/GenBank/DDBJ databases">
        <title>Complete sequence of chromosome 1 of Shewanella sp. ANA-3.</title>
        <authorList>
            <person name="Copeland A."/>
            <person name="Lucas S."/>
            <person name="Lapidus A."/>
            <person name="Barry K."/>
            <person name="Detter J.C."/>
            <person name="Glavina del Rio T."/>
            <person name="Hammon N."/>
            <person name="Israni S."/>
            <person name="Dalin E."/>
            <person name="Tice H."/>
            <person name="Pitluck S."/>
            <person name="Chertkov O."/>
            <person name="Brettin T."/>
            <person name="Bruce D."/>
            <person name="Han C."/>
            <person name="Tapia R."/>
            <person name="Gilna P."/>
            <person name="Schmutz J."/>
            <person name="Larimer F."/>
            <person name="Land M."/>
            <person name="Hauser L."/>
            <person name="Kyrpides N."/>
            <person name="Kim E."/>
            <person name="Newman D."/>
            <person name="Salticov C."/>
            <person name="Konstantinidis K."/>
            <person name="Klappenback J."/>
            <person name="Tiedje J."/>
            <person name="Richardson P."/>
        </authorList>
    </citation>
    <scope>NUCLEOTIDE SEQUENCE [LARGE SCALE GENOMIC DNA]</scope>
    <source>
        <strain>ANA-3</strain>
    </source>
</reference>
<feature type="chain" id="PRO_1000056199" description="Bifunctional protein GlmU">
    <location>
        <begin position="1"/>
        <end position="454"/>
    </location>
</feature>
<feature type="region of interest" description="Pyrophosphorylase" evidence="1">
    <location>
        <begin position="1"/>
        <end position="226"/>
    </location>
</feature>
<feature type="region of interest" description="Linker" evidence="1">
    <location>
        <begin position="227"/>
        <end position="247"/>
    </location>
</feature>
<feature type="region of interest" description="N-acetyltransferase" evidence="1">
    <location>
        <begin position="248"/>
        <end position="454"/>
    </location>
</feature>
<feature type="active site" description="Proton acceptor" evidence="1">
    <location>
        <position position="360"/>
    </location>
</feature>
<feature type="binding site" evidence="1">
    <location>
        <begin position="8"/>
        <end position="11"/>
    </location>
    <ligand>
        <name>UDP-N-acetyl-alpha-D-glucosamine</name>
        <dbReference type="ChEBI" id="CHEBI:57705"/>
    </ligand>
</feature>
<feature type="binding site" evidence="1">
    <location>
        <position position="22"/>
    </location>
    <ligand>
        <name>UDP-N-acetyl-alpha-D-glucosamine</name>
        <dbReference type="ChEBI" id="CHEBI:57705"/>
    </ligand>
</feature>
<feature type="binding site" evidence="1">
    <location>
        <position position="73"/>
    </location>
    <ligand>
        <name>UDP-N-acetyl-alpha-D-glucosamine</name>
        <dbReference type="ChEBI" id="CHEBI:57705"/>
    </ligand>
</feature>
<feature type="binding site" evidence="1">
    <location>
        <begin position="78"/>
        <end position="79"/>
    </location>
    <ligand>
        <name>UDP-N-acetyl-alpha-D-glucosamine</name>
        <dbReference type="ChEBI" id="CHEBI:57705"/>
    </ligand>
</feature>
<feature type="binding site" evidence="1">
    <location>
        <begin position="100"/>
        <end position="102"/>
    </location>
    <ligand>
        <name>UDP-N-acetyl-alpha-D-glucosamine</name>
        <dbReference type="ChEBI" id="CHEBI:57705"/>
    </ligand>
</feature>
<feature type="binding site" evidence="1">
    <location>
        <position position="102"/>
    </location>
    <ligand>
        <name>Mg(2+)</name>
        <dbReference type="ChEBI" id="CHEBI:18420"/>
    </ligand>
</feature>
<feature type="binding site" evidence="1">
    <location>
        <position position="137"/>
    </location>
    <ligand>
        <name>UDP-N-acetyl-alpha-D-glucosamine</name>
        <dbReference type="ChEBI" id="CHEBI:57705"/>
    </ligand>
</feature>
<feature type="binding site" evidence="1">
    <location>
        <position position="151"/>
    </location>
    <ligand>
        <name>UDP-N-acetyl-alpha-D-glucosamine</name>
        <dbReference type="ChEBI" id="CHEBI:57705"/>
    </ligand>
</feature>
<feature type="binding site" evidence="1">
    <location>
        <position position="166"/>
    </location>
    <ligand>
        <name>UDP-N-acetyl-alpha-D-glucosamine</name>
        <dbReference type="ChEBI" id="CHEBI:57705"/>
    </ligand>
</feature>
<feature type="binding site" evidence="1">
    <location>
        <position position="224"/>
    </location>
    <ligand>
        <name>Mg(2+)</name>
        <dbReference type="ChEBI" id="CHEBI:18420"/>
    </ligand>
</feature>
<feature type="binding site" evidence="1">
    <location>
        <position position="224"/>
    </location>
    <ligand>
        <name>UDP-N-acetyl-alpha-D-glucosamine</name>
        <dbReference type="ChEBI" id="CHEBI:57705"/>
    </ligand>
</feature>
<feature type="binding site" evidence="1">
    <location>
        <position position="330"/>
    </location>
    <ligand>
        <name>UDP-N-acetyl-alpha-D-glucosamine</name>
        <dbReference type="ChEBI" id="CHEBI:57705"/>
    </ligand>
</feature>
<feature type="binding site" evidence="1">
    <location>
        <position position="348"/>
    </location>
    <ligand>
        <name>UDP-N-acetyl-alpha-D-glucosamine</name>
        <dbReference type="ChEBI" id="CHEBI:57705"/>
    </ligand>
</feature>
<feature type="binding site" evidence="1">
    <location>
        <position position="363"/>
    </location>
    <ligand>
        <name>UDP-N-acetyl-alpha-D-glucosamine</name>
        <dbReference type="ChEBI" id="CHEBI:57705"/>
    </ligand>
</feature>
<feature type="binding site" evidence="1">
    <location>
        <position position="374"/>
    </location>
    <ligand>
        <name>UDP-N-acetyl-alpha-D-glucosamine</name>
        <dbReference type="ChEBI" id="CHEBI:57705"/>
    </ligand>
</feature>
<feature type="binding site" evidence="1">
    <location>
        <position position="377"/>
    </location>
    <ligand>
        <name>acetyl-CoA</name>
        <dbReference type="ChEBI" id="CHEBI:57288"/>
    </ligand>
</feature>
<feature type="binding site" evidence="1">
    <location>
        <begin position="383"/>
        <end position="384"/>
    </location>
    <ligand>
        <name>acetyl-CoA</name>
        <dbReference type="ChEBI" id="CHEBI:57288"/>
    </ligand>
</feature>
<feature type="binding site" evidence="1">
    <location>
        <position position="402"/>
    </location>
    <ligand>
        <name>acetyl-CoA</name>
        <dbReference type="ChEBI" id="CHEBI:57288"/>
    </ligand>
</feature>
<feature type="binding site" evidence="1">
    <location>
        <position position="420"/>
    </location>
    <ligand>
        <name>acetyl-CoA</name>
        <dbReference type="ChEBI" id="CHEBI:57288"/>
    </ligand>
</feature>
<feature type="binding site" evidence="1">
    <location>
        <position position="437"/>
    </location>
    <ligand>
        <name>acetyl-CoA</name>
        <dbReference type="ChEBI" id="CHEBI:57288"/>
    </ligand>
</feature>
<evidence type="ECO:0000255" key="1">
    <source>
        <dbReference type="HAMAP-Rule" id="MF_01631"/>
    </source>
</evidence>